<reference key="1">
    <citation type="journal article" date="2016" name="Front. Microbiol.">
        <title>The complete genome sequence of hyperthermophile Dictyoglomus turgidum DSM 6724 reveals a specialized carbohydrate fermentor.</title>
        <authorList>
            <person name="Brumm P.J."/>
            <person name="Gowda K."/>
            <person name="Robb F.T."/>
            <person name="Mead D.A."/>
        </authorList>
    </citation>
    <scope>NUCLEOTIDE SEQUENCE [LARGE SCALE GENOMIC DNA]</scope>
    <source>
        <strain>DSM 6724 / Z-1310</strain>
    </source>
</reference>
<organism>
    <name type="scientific">Dictyoglomus turgidum (strain DSM 6724 / Z-1310)</name>
    <dbReference type="NCBI Taxonomy" id="515635"/>
    <lineage>
        <taxon>Bacteria</taxon>
        <taxon>Pseudomonadati</taxon>
        <taxon>Dictyoglomota</taxon>
        <taxon>Dictyoglomia</taxon>
        <taxon>Dictyoglomales</taxon>
        <taxon>Dictyoglomaceae</taxon>
        <taxon>Dictyoglomus</taxon>
    </lineage>
</organism>
<name>DTD_DICTD</name>
<protein>
    <recommendedName>
        <fullName evidence="1">D-aminoacyl-tRNA deacylase</fullName>
        <shortName evidence="1">DTD</shortName>
        <ecNumber evidence="1">3.1.1.96</ecNumber>
    </recommendedName>
    <alternativeName>
        <fullName evidence="1">Gly-tRNA(Ala) deacylase</fullName>
    </alternativeName>
</protein>
<gene>
    <name evidence="1" type="primary">dtd</name>
    <name type="ordered locus">Dtur_0970</name>
</gene>
<comment type="function">
    <text evidence="1">An aminoacyl-tRNA editing enzyme that deacylates mischarged D-aminoacyl-tRNAs. Also deacylates mischarged glycyl-tRNA(Ala), protecting cells against glycine mischarging by AlaRS. Acts via tRNA-based rather than protein-based catalysis; rejects L-amino acids rather than detecting D-amino acids in the active site. By recycling D-aminoacyl-tRNA to D-amino acids and free tRNA molecules, this enzyme counteracts the toxicity associated with the formation of D-aminoacyl-tRNA entities in vivo and helps enforce protein L-homochirality.</text>
</comment>
<comment type="catalytic activity">
    <reaction evidence="1">
        <text>glycyl-tRNA(Ala) + H2O = tRNA(Ala) + glycine + H(+)</text>
        <dbReference type="Rhea" id="RHEA:53744"/>
        <dbReference type="Rhea" id="RHEA-COMP:9657"/>
        <dbReference type="Rhea" id="RHEA-COMP:13640"/>
        <dbReference type="ChEBI" id="CHEBI:15377"/>
        <dbReference type="ChEBI" id="CHEBI:15378"/>
        <dbReference type="ChEBI" id="CHEBI:57305"/>
        <dbReference type="ChEBI" id="CHEBI:78442"/>
        <dbReference type="ChEBI" id="CHEBI:78522"/>
        <dbReference type="EC" id="3.1.1.96"/>
    </reaction>
</comment>
<comment type="catalytic activity">
    <reaction evidence="1">
        <text>a D-aminoacyl-tRNA + H2O = a tRNA + a D-alpha-amino acid + H(+)</text>
        <dbReference type="Rhea" id="RHEA:13953"/>
        <dbReference type="Rhea" id="RHEA-COMP:10123"/>
        <dbReference type="Rhea" id="RHEA-COMP:10124"/>
        <dbReference type="ChEBI" id="CHEBI:15377"/>
        <dbReference type="ChEBI" id="CHEBI:15378"/>
        <dbReference type="ChEBI" id="CHEBI:59871"/>
        <dbReference type="ChEBI" id="CHEBI:78442"/>
        <dbReference type="ChEBI" id="CHEBI:79333"/>
        <dbReference type="EC" id="3.1.1.96"/>
    </reaction>
</comment>
<comment type="subunit">
    <text evidence="1">Homodimer.</text>
</comment>
<comment type="subcellular location">
    <subcellularLocation>
        <location evidence="1">Cytoplasm</location>
    </subcellularLocation>
</comment>
<comment type="domain">
    <text evidence="1">A Gly-cisPro motif from one monomer fits into the active site of the other monomer to allow specific chiral rejection of L-amino acids.</text>
</comment>
<comment type="similarity">
    <text evidence="1">Belongs to the DTD family.</text>
</comment>
<keyword id="KW-0963">Cytoplasm</keyword>
<keyword id="KW-0378">Hydrolase</keyword>
<keyword id="KW-1185">Reference proteome</keyword>
<keyword id="KW-0694">RNA-binding</keyword>
<keyword id="KW-0820">tRNA-binding</keyword>
<dbReference type="EC" id="3.1.1.96" evidence="1"/>
<dbReference type="EMBL" id="CP001251">
    <property type="protein sequence ID" value="ACK42250.1"/>
    <property type="molecule type" value="Genomic_DNA"/>
</dbReference>
<dbReference type="RefSeq" id="WP_012583334.1">
    <property type="nucleotide sequence ID" value="NC_011661.1"/>
</dbReference>
<dbReference type="RefSeq" id="YP_002352864.1">
    <property type="nucleotide sequence ID" value="NC_011661.1"/>
</dbReference>
<dbReference type="SMR" id="B8E1C2"/>
<dbReference type="FunCoup" id="B8E1C2">
    <property type="interactions" value="292"/>
</dbReference>
<dbReference type="STRING" id="515635.Dtur_0970"/>
<dbReference type="EnsemblBacteria" id="ACK42250">
    <property type="protein sequence ID" value="ACK42250"/>
    <property type="gene ID" value="Dtur_0970"/>
</dbReference>
<dbReference type="KEGG" id="dtu:Dtur_0970"/>
<dbReference type="PATRIC" id="fig|515635.4.peg.1007"/>
<dbReference type="eggNOG" id="COG1490">
    <property type="taxonomic scope" value="Bacteria"/>
</dbReference>
<dbReference type="HOGENOM" id="CLU_076901_1_0_0"/>
<dbReference type="InParanoid" id="B8E1C2"/>
<dbReference type="OrthoDB" id="9801395at2"/>
<dbReference type="Proteomes" id="UP000007719">
    <property type="component" value="Chromosome"/>
</dbReference>
<dbReference type="GO" id="GO:0005737">
    <property type="term" value="C:cytoplasm"/>
    <property type="evidence" value="ECO:0000318"/>
    <property type="project" value="GO_Central"/>
</dbReference>
<dbReference type="GO" id="GO:0051500">
    <property type="term" value="F:D-tyrosyl-tRNA(Tyr) deacylase activity"/>
    <property type="evidence" value="ECO:0000318"/>
    <property type="project" value="GO_Central"/>
</dbReference>
<dbReference type="GO" id="GO:0106026">
    <property type="term" value="F:Gly-tRNA(Ala) deacylase activity"/>
    <property type="evidence" value="ECO:0007669"/>
    <property type="project" value="UniProtKB-UniRule"/>
</dbReference>
<dbReference type="GO" id="GO:0043908">
    <property type="term" value="F:Ser(Gly)-tRNA(Ala) hydrolase activity"/>
    <property type="evidence" value="ECO:0007669"/>
    <property type="project" value="UniProtKB-UniRule"/>
</dbReference>
<dbReference type="GO" id="GO:0000049">
    <property type="term" value="F:tRNA binding"/>
    <property type="evidence" value="ECO:0007669"/>
    <property type="project" value="UniProtKB-UniRule"/>
</dbReference>
<dbReference type="GO" id="GO:0019478">
    <property type="term" value="P:D-amino acid catabolic process"/>
    <property type="evidence" value="ECO:0007669"/>
    <property type="project" value="UniProtKB-UniRule"/>
</dbReference>
<dbReference type="GO" id="GO:0006399">
    <property type="term" value="P:tRNA metabolic process"/>
    <property type="evidence" value="ECO:0000318"/>
    <property type="project" value="GO_Central"/>
</dbReference>
<dbReference type="CDD" id="cd00563">
    <property type="entry name" value="Dtyr_deacylase"/>
    <property type="match status" value="1"/>
</dbReference>
<dbReference type="FunFam" id="3.50.80.10:FF:000001">
    <property type="entry name" value="D-aminoacyl-tRNA deacylase"/>
    <property type="match status" value="1"/>
</dbReference>
<dbReference type="Gene3D" id="3.50.80.10">
    <property type="entry name" value="D-tyrosyl-tRNA(Tyr) deacylase"/>
    <property type="match status" value="1"/>
</dbReference>
<dbReference type="HAMAP" id="MF_00518">
    <property type="entry name" value="Deacylase_Dtd"/>
    <property type="match status" value="1"/>
</dbReference>
<dbReference type="InterPro" id="IPR003732">
    <property type="entry name" value="Daa-tRNA_deacyls_DTD"/>
</dbReference>
<dbReference type="InterPro" id="IPR023509">
    <property type="entry name" value="DTD-like_sf"/>
</dbReference>
<dbReference type="NCBIfam" id="TIGR00256">
    <property type="entry name" value="D-aminoacyl-tRNA deacylase"/>
    <property type="match status" value="1"/>
</dbReference>
<dbReference type="PANTHER" id="PTHR10472:SF5">
    <property type="entry name" value="D-AMINOACYL-TRNA DEACYLASE 1"/>
    <property type="match status" value="1"/>
</dbReference>
<dbReference type="PANTHER" id="PTHR10472">
    <property type="entry name" value="D-TYROSYL-TRNA TYR DEACYLASE"/>
    <property type="match status" value="1"/>
</dbReference>
<dbReference type="Pfam" id="PF02580">
    <property type="entry name" value="Tyr_Deacylase"/>
    <property type="match status" value="1"/>
</dbReference>
<dbReference type="SUPFAM" id="SSF69500">
    <property type="entry name" value="DTD-like"/>
    <property type="match status" value="1"/>
</dbReference>
<proteinExistence type="inferred from homology"/>
<sequence length="156" mass="17842">MRAVIQRVKKASVKVNGELISQISQGLLIFLGISKKDKEEDIKILADKIADLRIFSDENGKMNLSIKEVNGDILVVSQFTLFADCRRGKRPDFTDAADKEKALDYYKKFVAYLKNKSEKVEEGIFQAYMEVELINDGPVTIILDTEDLKKPRRRKE</sequence>
<evidence type="ECO:0000255" key="1">
    <source>
        <dbReference type="HAMAP-Rule" id="MF_00518"/>
    </source>
</evidence>
<feature type="chain" id="PRO_1000127522" description="D-aminoacyl-tRNA deacylase">
    <location>
        <begin position="1"/>
        <end position="156"/>
    </location>
</feature>
<feature type="short sequence motif" description="Gly-cisPro motif, important for rejection of L-amino acids" evidence="1">
    <location>
        <begin position="137"/>
        <end position="138"/>
    </location>
</feature>
<accession>B8E1C2</accession>